<sequence length="299" mass="31769">METLLSPSTLLSPLRGSKKKPASPAASASSSSSSPARSVVSCALRRQQPPPQAVAAWRGDGGRGGGVGSWATFLQHGLAAAALSLAISMAPAPAPAVASEFDVLNGGPPEDTYVVDDAGVLSRVTKSDVKRLVRDLESRKNIRINFITVRKLTSKADAFEYADQVLEKWYPTVEEGNNKGIVVLVTSQKEGAITGGPAFVQAVGDEILDSTVSENLPVLATDEKYNEAIYTTAKRLAAAIDGLPDPGGPTFKDNKRESNFKTKEETEEKRGQFTLVVGGLLVIAFVVPMAQYYAYISKK</sequence>
<protein>
    <recommendedName>
        <fullName>UPF0603 protein Os05g0401100, chloroplastic</fullName>
    </recommendedName>
</protein>
<dbReference type="EMBL" id="AC135418">
    <property type="protein sequence ID" value="AAT85144.1"/>
    <property type="molecule type" value="Genomic_DNA"/>
</dbReference>
<dbReference type="EMBL" id="AP008211">
    <property type="protein sequence ID" value="BAF17400.1"/>
    <property type="molecule type" value="Genomic_DNA"/>
</dbReference>
<dbReference type="EMBL" id="AP014961">
    <property type="protein sequence ID" value="BAS93918.1"/>
    <property type="molecule type" value="Genomic_DNA"/>
</dbReference>
<dbReference type="RefSeq" id="XP_015640458.1">
    <property type="nucleotide sequence ID" value="XM_015784972.1"/>
</dbReference>
<dbReference type="SMR" id="Q6ATY4"/>
<dbReference type="BioGRID" id="807766">
    <property type="interactions" value="1"/>
</dbReference>
<dbReference type="FunCoup" id="Q6ATY4">
    <property type="interactions" value="1227"/>
</dbReference>
<dbReference type="STRING" id="39947.Q6ATY4"/>
<dbReference type="PaxDb" id="39947-Q6ATY4"/>
<dbReference type="EnsemblPlants" id="Os05t0401100-01">
    <property type="protein sequence ID" value="Os05t0401100-01"/>
    <property type="gene ID" value="Os05g0401100"/>
</dbReference>
<dbReference type="EnsemblPlants" id="Os05t0401100-02">
    <property type="protein sequence ID" value="Os05t0401100-02"/>
    <property type="gene ID" value="Os05g0401100"/>
</dbReference>
<dbReference type="Gramene" id="Os05t0401100-01">
    <property type="protein sequence ID" value="Os05t0401100-01"/>
    <property type="gene ID" value="Os05g0401100"/>
</dbReference>
<dbReference type="Gramene" id="Os05t0401100-02">
    <property type="protein sequence ID" value="Os05t0401100-02"/>
    <property type="gene ID" value="Os05g0401100"/>
</dbReference>
<dbReference type="KEGG" id="dosa:Os05g0401100"/>
<dbReference type="eggNOG" id="ENOG502QQ6F">
    <property type="taxonomic scope" value="Eukaryota"/>
</dbReference>
<dbReference type="HOGENOM" id="CLU_065264_0_1_1"/>
<dbReference type="InParanoid" id="Q6ATY4"/>
<dbReference type="OMA" id="IPMVTYF"/>
<dbReference type="OrthoDB" id="5645at2759"/>
<dbReference type="Proteomes" id="UP000000763">
    <property type="component" value="Chromosome 5"/>
</dbReference>
<dbReference type="Proteomes" id="UP000059680">
    <property type="component" value="Chromosome 5"/>
</dbReference>
<dbReference type="GO" id="GO:0009535">
    <property type="term" value="C:chloroplast thylakoid membrane"/>
    <property type="evidence" value="ECO:0007669"/>
    <property type="project" value="UniProtKB-SubCell"/>
</dbReference>
<dbReference type="Gene3D" id="3.10.310.50">
    <property type="match status" value="1"/>
</dbReference>
<dbReference type="InterPro" id="IPR007621">
    <property type="entry name" value="TPM_dom"/>
</dbReference>
<dbReference type="PANTHER" id="PTHR30373">
    <property type="entry name" value="UPF0603 PROTEIN YGCG"/>
    <property type="match status" value="1"/>
</dbReference>
<dbReference type="PANTHER" id="PTHR30373:SF2">
    <property type="entry name" value="UPF0603 PROTEIN YGCG"/>
    <property type="match status" value="1"/>
</dbReference>
<dbReference type="Pfam" id="PF04536">
    <property type="entry name" value="TPM_phosphatase"/>
    <property type="match status" value="1"/>
</dbReference>
<evidence type="ECO:0000250" key="1"/>
<evidence type="ECO:0000255" key="2"/>
<evidence type="ECO:0000256" key="3">
    <source>
        <dbReference type="SAM" id="MobiDB-lite"/>
    </source>
</evidence>
<evidence type="ECO:0000305" key="4"/>
<comment type="subcellular location">
    <subcellularLocation>
        <location evidence="1">Plastid</location>
        <location evidence="1">Chloroplast thylakoid membrane</location>
        <topology evidence="1">Single-pass membrane protein</topology>
        <orientation evidence="1">Lumenal side</orientation>
    </subcellularLocation>
</comment>
<comment type="similarity">
    <text evidence="4">Belongs to the UPF0603 family.</text>
</comment>
<feature type="transit peptide" description="Chloroplast" evidence="2">
    <location>
        <begin position="1"/>
        <end position="41"/>
    </location>
</feature>
<feature type="transit peptide" description="Thylakoid" evidence="1">
    <location>
        <begin position="42"/>
        <end position="98"/>
    </location>
</feature>
<feature type="chain" id="PRO_0000342093" description="UPF0603 protein Os05g0401100, chloroplastic">
    <location>
        <begin position="99"/>
        <end position="299"/>
    </location>
</feature>
<feature type="transmembrane region" description="Helical" evidence="2">
    <location>
        <begin position="276"/>
        <end position="296"/>
    </location>
</feature>
<feature type="region of interest" description="Disordered" evidence="3">
    <location>
        <begin position="1"/>
        <end position="60"/>
    </location>
</feature>
<feature type="region of interest" description="Disordered" evidence="3">
    <location>
        <begin position="244"/>
        <end position="265"/>
    </location>
</feature>
<feature type="compositionally biased region" description="Low complexity" evidence="3">
    <location>
        <begin position="1"/>
        <end position="14"/>
    </location>
</feature>
<feature type="compositionally biased region" description="Low complexity" evidence="3">
    <location>
        <begin position="22"/>
        <end position="36"/>
    </location>
</feature>
<feature type="compositionally biased region" description="Basic and acidic residues" evidence="3">
    <location>
        <begin position="252"/>
        <end position="265"/>
    </location>
</feature>
<gene>
    <name type="ordered locus">Os05g0401100</name>
    <name type="ordered locus">LOC_Os05g33280</name>
    <name type="ORF">OSJNBa0035J16.9</name>
</gene>
<name>U603_ORYSJ</name>
<reference key="1">
    <citation type="journal article" date="2005" name="Mol. Genet. Genomics">
        <title>A fine physical map of the rice chromosome 5.</title>
        <authorList>
            <person name="Cheng C.-H."/>
            <person name="Chung M.C."/>
            <person name="Liu S.-M."/>
            <person name="Chen S.-K."/>
            <person name="Kao F.Y."/>
            <person name="Lin S.-J."/>
            <person name="Hsiao S.-H."/>
            <person name="Tseng I.C."/>
            <person name="Hsing Y.-I.C."/>
            <person name="Wu H.-P."/>
            <person name="Chen C.-S."/>
            <person name="Shaw J.-F."/>
            <person name="Wu J."/>
            <person name="Matsumoto T."/>
            <person name="Sasaki T."/>
            <person name="Chen H.-C."/>
            <person name="Chow T.-Y."/>
        </authorList>
    </citation>
    <scope>NUCLEOTIDE SEQUENCE [LARGE SCALE GENOMIC DNA]</scope>
    <source>
        <strain>cv. Nipponbare</strain>
    </source>
</reference>
<reference key="2">
    <citation type="journal article" date="2005" name="Nature">
        <title>The map-based sequence of the rice genome.</title>
        <authorList>
            <consortium name="International rice genome sequencing project (IRGSP)"/>
        </authorList>
    </citation>
    <scope>NUCLEOTIDE SEQUENCE [LARGE SCALE GENOMIC DNA]</scope>
    <source>
        <strain>cv. Nipponbare</strain>
    </source>
</reference>
<reference key="3">
    <citation type="journal article" date="2008" name="Nucleic Acids Res.">
        <title>The rice annotation project database (RAP-DB): 2008 update.</title>
        <authorList>
            <consortium name="The rice annotation project (RAP)"/>
        </authorList>
    </citation>
    <scope>GENOME REANNOTATION</scope>
    <source>
        <strain>cv. Nipponbare</strain>
    </source>
</reference>
<reference key="4">
    <citation type="journal article" date="2013" name="Rice">
        <title>Improvement of the Oryza sativa Nipponbare reference genome using next generation sequence and optical map data.</title>
        <authorList>
            <person name="Kawahara Y."/>
            <person name="de la Bastide M."/>
            <person name="Hamilton J.P."/>
            <person name="Kanamori H."/>
            <person name="McCombie W.R."/>
            <person name="Ouyang S."/>
            <person name="Schwartz D.C."/>
            <person name="Tanaka T."/>
            <person name="Wu J."/>
            <person name="Zhou S."/>
            <person name="Childs K.L."/>
            <person name="Davidson R.M."/>
            <person name="Lin H."/>
            <person name="Quesada-Ocampo L."/>
            <person name="Vaillancourt B."/>
            <person name="Sakai H."/>
            <person name="Lee S.S."/>
            <person name="Kim J."/>
            <person name="Numa H."/>
            <person name="Itoh T."/>
            <person name="Buell C.R."/>
            <person name="Matsumoto T."/>
        </authorList>
    </citation>
    <scope>GENOME REANNOTATION</scope>
    <source>
        <strain>cv. Nipponbare</strain>
    </source>
</reference>
<organism>
    <name type="scientific">Oryza sativa subsp. japonica</name>
    <name type="common">Rice</name>
    <dbReference type="NCBI Taxonomy" id="39947"/>
    <lineage>
        <taxon>Eukaryota</taxon>
        <taxon>Viridiplantae</taxon>
        <taxon>Streptophyta</taxon>
        <taxon>Embryophyta</taxon>
        <taxon>Tracheophyta</taxon>
        <taxon>Spermatophyta</taxon>
        <taxon>Magnoliopsida</taxon>
        <taxon>Liliopsida</taxon>
        <taxon>Poales</taxon>
        <taxon>Poaceae</taxon>
        <taxon>BOP clade</taxon>
        <taxon>Oryzoideae</taxon>
        <taxon>Oryzeae</taxon>
        <taxon>Oryzinae</taxon>
        <taxon>Oryza</taxon>
        <taxon>Oryza sativa</taxon>
    </lineage>
</organism>
<proteinExistence type="inferred from homology"/>
<keyword id="KW-0150">Chloroplast</keyword>
<keyword id="KW-0472">Membrane</keyword>
<keyword id="KW-0934">Plastid</keyword>
<keyword id="KW-1185">Reference proteome</keyword>
<keyword id="KW-0793">Thylakoid</keyword>
<keyword id="KW-0809">Transit peptide</keyword>
<keyword id="KW-0812">Transmembrane</keyword>
<keyword id="KW-1133">Transmembrane helix</keyword>
<accession>Q6ATY4</accession>
<accession>A0A0P0WM46</accession>